<evidence type="ECO:0000255" key="1">
    <source>
        <dbReference type="HAMAP-Rule" id="MF_00148"/>
    </source>
</evidence>
<sequence length="217" mass="24244">MAHSIWHEKIKSFLPEHYYGRINHFLDEAYASGLVYPQRENVFKALQVTPLEETKVLILGQDPYHGPKQAQGLSFSVPEEISAPPSLINILKELADDIGPRDHHDLSTWASQGVLLLNACLTVPAGQANGHAGLIWEPFTDAVIKVLNEKDSPVVFILWGAYARKKKAFITNPKHHIIESPHPSPLSSYRGFFGSKPFSRTNAILEKEGMTGVDWLK</sequence>
<accession>P0DG74</accession>
<accession>Q8K7U9</accession>
<keyword id="KW-0963">Cytoplasm</keyword>
<keyword id="KW-0227">DNA damage</keyword>
<keyword id="KW-0234">DNA repair</keyword>
<keyword id="KW-0378">Hydrolase</keyword>
<dbReference type="EC" id="3.2.2.27" evidence="1"/>
<dbReference type="EMBL" id="AE014074">
    <property type="protein sequence ID" value="AAM79228.1"/>
    <property type="molecule type" value="Genomic_DNA"/>
</dbReference>
<dbReference type="RefSeq" id="WP_002994022.1">
    <property type="nucleotide sequence ID" value="NC_004070.1"/>
</dbReference>
<dbReference type="SMR" id="P0DG74"/>
<dbReference type="KEGG" id="spg:SpyM3_0621"/>
<dbReference type="HOGENOM" id="CLU_032162_3_1_9"/>
<dbReference type="Proteomes" id="UP000000564">
    <property type="component" value="Chromosome"/>
</dbReference>
<dbReference type="GO" id="GO:0005737">
    <property type="term" value="C:cytoplasm"/>
    <property type="evidence" value="ECO:0007669"/>
    <property type="project" value="UniProtKB-SubCell"/>
</dbReference>
<dbReference type="GO" id="GO:0004844">
    <property type="term" value="F:uracil DNA N-glycosylase activity"/>
    <property type="evidence" value="ECO:0007669"/>
    <property type="project" value="UniProtKB-UniRule"/>
</dbReference>
<dbReference type="GO" id="GO:0097510">
    <property type="term" value="P:base-excision repair, AP site formation via deaminated base removal"/>
    <property type="evidence" value="ECO:0007669"/>
    <property type="project" value="TreeGrafter"/>
</dbReference>
<dbReference type="CDD" id="cd10027">
    <property type="entry name" value="UDG-F1-like"/>
    <property type="match status" value="1"/>
</dbReference>
<dbReference type="FunFam" id="3.40.470.10:FF:000008">
    <property type="entry name" value="Uracil-DNA glycosylase"/>
    <property type="match status" value="1"/>
</dbReference>
<dbReference type="Gene3D" id="3.40.470.10">
    <property type="entry name" value="Uracil-DNA glycosylase-like domain"/>
    <property type="match status" value="1"/>
</dbReference>
<dbReference type="HAMAP" id="MF_00148">
    <property type="entry name" value="UDG"/>
    <property type="match status" value="1"/>
</dbReference>
<dbReference type="InterPro" id="IPR002043">
    <property type="entry name" value="UDG_fam1"/>
</dbReference>
<dbReference type="InterPro" id="IPR018085">
    <property type="entry name" value="Ura-DNA_Glyclase_AS"/>
</dbReference>
<dbReference type="InterPro" id="IPR005122">
    <property type="entry name" value="Uracil-DNA_glycosylase-like"/>
</dbReference>
<dbReference type="InterPro" id="IPR036895">
    <property type="entry name" value="Uracil-DNA_glycosylase-like_sf"/>
</dbReference>
<dbReference type="NCBIfam" id="NF003588">
    <property type="entry name" value="PRK05254.1-1"/>
    <property type="match status" value="1"/>
</dbReference>
<dbReference type="NCBIfam" id="NF003589">
    <property type="entry name" value="PRK05254.1-2"/>
    <property type="match status" value="1"/>
</dbReference>
<dbReference type="NCBIfam" id="NF003592">
    <property type="entry name" value="PRK05254.1-5"/>
    <property type="match status" value="1"/>
</dbReference>
<dbReference type="NCBIfam" id="TIGR00628">
    <property type="entry name" value="ung"/>
    <property type="match status" value="1"/>
</dbReference>
<dbReference type="PANTHER" id="PTHR11264">
    <property type="entry name" value="URACIL-DNA GLYCOSYLASE"/>
    <property type="match status" value="1"/>
</dbReference>
<dbReference type="PANTHER" id="PTHR11264:SF0">
    <property type="entry name" value="URACIL-DNA GLYCOSYLASE"/>
    <property type="match status" value="1"/>
</dbReference>
<dbReference type="Pfam" id="PF03167">
    <property type="entry name" value="UDG"/>
    <property type="match status" value="1"/>
</dbReference>
<dbReference type="SMART" id="SM00986">
    <property type="entry name" value="UDG"/>
    <property type="match status" value="1"/>
</dbReference>
<dbReference type="SMART" id="SM00987">
    <property type="entry name" value="UreE_C"/>
    <property type="match status" value="1"/>
</dbReference>
<dbReference type="SUPFAM" id="SSF52141">
    <property type="entry name" value="Uracil-DNA glycosylase-like"/>
    <property type="match status" value="1"/>
</dbReference>
<dbReference type="PROSITE" id="PS00130">
    <property type="entry name" value="U_DNA_GLYCOSYLASE"/>
    <property type="match status" value="1"/>
</dbReference>
<gene>
    <name evidence="1" type="primary">ung</name>
    <name type="ordered locus">SpyM3_0621</name>
</gene>
<reference key="1">
    <citation type="journal article" date="2002" name="Proc. Natl. Acad. Sci. U.S.A.">
        <title>Genome sequence of a serotype M3 strain of group A Streptococcus: phage-encoded toxins, the high-virulence phenotype, and clone emergence.</title>
        <authorList>
            <person name="Beres S.B."/>
            <person name="Sylva G.L."/>
            <person name="Barbian K.D."/>
            <person name="Lei B."/>
            <person name="Hoff J.S."/>
            <person name="Mammarella N.D."/>
            <person name="Liu M.-Y."/>
            <person name="Smoot J.C."/>
            <person name="Porcella S.F."/>
            <person name="Parkins L.D."/>
            <person name="Campbell D.S."/>
            <person name="Smith T.M."/>
            <person name="McCormick J.K."/>
            <person name="Leung D.Y.M."/>
            <person name="Schlievert P.M."/>
            <person name="Musser J.M."/>
        </authorList>
    </citation>
    <scope>NUCLEOTIDE SEQUENCE [LARGE SCALE GENOMIC DNA]</scope>
    <source>
        <strain>ATCC BAA-595 / MGAS315</strain>
    </source>
</reference>
<protein>
    <recommendedName>
        <fullName evidence="1">Uracil-DNA glycosylase</fullName>
        <shortName evidence="1">UDG</shortName>
        <ecNumber evidence="1">3.2.2.27</ecNumber>
    </recommendedName>
</protein>
<name>UNG_STRP3</name>
<comment type="function">
    <text evidence="1">Excises uracil residues from the DNA which can arise as a result of misincorporation of dUMP residues by DNA polymerase or due to deamination of cytosine.</text>
</comment>
<comment type="catalytic activity">
    <reaction evidence="1">
        <text>Hydrolyzes single-stranded DNA or mismatched double-stranded DNA and polynucleotides, releasing free uracil.</text>
        <dbReference type="EC" id="3.2.2.27"/>
    </reaction>
</comment>
<comment type="subcellular location">
    <subcellularLocation>
        <location evidence="1">Cytoplasm</location>
    </subcellularLocation>
</comment>
<comment type="similarity">
    <text evidence="1">Belongs to the uracil-DNA glycosylase (UDG) superfamily. UNG family.</text>
</comment>
<organism>
    <name type="scientific">Streptococcus pyogenes serotype M3 (strain ATCC BAA-595 / MGAS315)</name>
    <dbReference type="NCBI Taxonomy" id="198466"/>
    <lineage>
        <taxon>Bacteria</taxon>
        <taxon>Bacillati</taxon>
        <taxon>Bacillota</taxon>
        <taxon>Bacilli</taxon>
        <taxon>Lactobacillales</taxon>
        <taxon>Streptococcaceae</taxon>
        <taxon>Streptococcus</taxon>
    </lineage>
</organism>
<proteinExistence type="inferred from homology"/>
<feature type="chain" id="PRO_0000176155" description="Uracil-DNA glycosylase">
    <location>
        <begin position="1"/>
        <end position="217"/>
    </location>
</feature>
<feature type="active site" description="Proton acceptor" evidence="1">
    <location>
        <position position="62"/>
    </location>
</feature>